<keyword id="KW-0067">ATP-binding</keyword>
<keyword id="KW-0238">DNA-binding</keyword>
<keyword id="KW-0479">Metal-binding</keyword>
<keyword id="KW-0547">Nucleotide-binding</keyword>
<keyword id="KW-1185">Reference proteome</keyword>
<keyword id="KW-0678">Repressor</keyword>
<keyword id="KW-0804">Transcription</keyword>
<keyword id="KW-0805">Transcription regulation</keyword>
<keyword id="KW-0862">Zinc</keyword>
<keyword id="KW-0863">Zinc-finger</keyword>
<dbReference type="EMBL" id="CP001349">
    <property type="protein sequence ID" value="ACL60141.1"/>
    <property type="molecule type" value="Genomic_DNA"/>
</dbReference>
<dbReference type="RefSeq" id="WP_015931751.1">
    <property type="nucleotide sequence ID" value="NC_011894.1"/>
</dbReference>
<dbReference type="SMR" id="B8ILE2"/>
<dbReference type="STRING" id="460265.Mnod_5296"/>
<dbReference type="KEGG" id="mno:Mnod_5296"/>
<dbReference type="eggNOG" id="COG1327">
    <property type="taxonomic scope" value="Bacteria"/>
</dbReference>
<dbReference type="HOGENOM" id="CLU_108412_0_1_5"/>
<dbReference type="OrthoDB" id="9807461at2"/>
<dbReference type="Proteomes" id="UP000008207">
    <property type="component" value="Chromosome"/>
</dbReference>
<dbReference type="GO" id="GO:0005524">
    <property type="term" value="F:ATP binding"/>
    <property type="evidence" value="ECO:0007669"/>
    <property type="project" value="UniProtKB-KW"/>
</dbReference>
<dbReference type="GO" id="GO:0003677">
    <property type="term" value="F:DNA binding"/>
    <property type="evidence" value="ECO:0007669"/>
    <property type="project" value="UniProtKB-KW"/>
</dbReference>
<dbReference type="GO" id="GO:0008270">
    <property type="term" value="F:zinc ion binding"/>
    <property type="evidence" value="ECO:0007669"/>
    <property type="project" value="UniProtKB-UniRule"/>
</dbReference>
<dbReference type="GO" id="GO:0045892">
    <property type="term" value="P:negative regulation of DNA-templated transcription"/>
    <property type="evidence" value="ECO:0007669"/>
    <property type="project" value="UniProtKB-UniRule"/>
</dbReference>
<dbReference type="HAMAP" id="MF_00440">
    <property type="entry name" value="NrdR"/>
    <property type="match status" value="1"/>
</dbReference>
<dbReference type="InterPro" id="IPR005144">
    <property type="entry name" value="ATP-cone_dom"/>
</dbReference>
<dbReference type="InterPro" id="IPR055173">
    <property type="entry name" value="NrdR-like_N"/>
</dbReference>
<dbReference type="InterPro" id="IPR003796">
    <property type="entry name" value="RNR_NrdR-like"/>
</dbReference>
<dbReference type="NCBIfam" id="TIGR00244">
    <property type="entry name" value="transcriptional regulator NrdR"/>
    <property type="match status" value="1"/>
</dbReference>
<dbReference type="PANTHER" id="PTHR30455">
    <property type="entry name" value="TRANSCRIPTIONAL REPRESSOR NRDR"/>
    <property type="match status" value="1"/>
</dbReference>
<dbReference type="PANTHER" id="PTHR30455:SF2">
    <property type="entry name" value="TRANSCRIPTIONAL REPRESSOR NRDR"/>
    <property type="match status" value="1"/>
</dbReference>
<dbReference type="Pfam" id="PF03477">
    <property type="entry name" value="ATP-cone"/>
    <property type="match status" value="1"/>
</dbReference>
<dbReference type="Pfam" id="PF22811">
    <property type="entry name" value="Zn_ribbon_NrdR"/>
    <property type="match status" value="1"/>
</dbReference>
<dbReference type="PROSITE" id="PS51161">
    <property type="entry name" value="ATP_CONE"/>
    <property type="match status" value="1"/>
</dbReference>
<proteinExistence type="inferred from homology"/>
<comment type="function">
    <text evidence="1">Negatively regulates transcription of bacterial ribonucleotide reductase nrd genes and operons by binding to NrdR-boxes.</text>
</comment>
<comment type="cofactor">
    <cofactor evidence="1">
        <name>Zn(2+)</name>
        <dbReference type="ChEBI" id="CHEBI:29105"/>
    </cofactor>
    <text evidence="1">Binds 1 zinc ion.</text>
</comment>
<comment type="similarity">
    <text evidence="1">Belongs to the NrdR family.</text>
</comment>
<sequence length="193" mass="21296">MRCPYCGGLDTQVKDSRPSEDASAIRRRRICPDCGGRFTTFERVQLRELTVVKRSGRKVPFDRDKLQRSIDVALRKRSVESDRIERLVSGITRQLESSGEPEVTSEAIGELVMEGLKGLDDVAYVRFASVYKNFREAKDFEELLGRLSADQQDGAVPQAEADRPIGAGPPSEAAQPAAGEGGDAPMRRARSRA</sequence>
<reference key="1">
    <citation type="submission" date="2009-01" db="EMBL/GenBank/DDBJ databases">
        <title>Complete sequence of chromosome of Methylobacterium nodulans ORS 2060.</title>
        <authorList>
            <consortium name="US DOE Joint Genome Institute"/>
            <person name="Lucas S."/>
            <person name="Copeland A."/>
            <person name="Lapidus A."/>
            <person name="Glavina del Rio T."/>
            <person name="Dalin E."/>
            <person name="Tice H."/>
            <person name="Bruce D."/>
            <person name="Goodwin L."/>
            <person name="Pitluck S."/>
            <person name="Sims D."/>
            <person name="Brettin T."/>
            <person name="Detter J.C."/>
            <person name="Han C."/>
            <person name="Larimer F."/>
            <person name="Land M."/>
            <person name="Hauser L."/>
            <person name="Kyrpides N."/>
            <person name="Ivanova N."/>
            <person name="Marx C.J."/>
            <person name="Richardson P."/>
        </authorList>
    </citation>
    <scope>NUCLEOTIDE SEQUENCE [LARGE SCALE GENOMIC DNA]</scope>
    <source>
        <strain>LMG 21967 / CNCM I-2342 / ORS 2060</strain>
    </source>
</reference>
<accession>B8ILE2</accession>
<evidence type="ECO:0000255" key="1">
    <source>
        <dbReference type="HAMAP-Rule" id="MF_00440"/>
    </source>
</evidence>
<evidence type="ECO:0000256" key="2">
    <source>
        <dbReference type="SAM" id="MobiDB-lite"/>
    </source>
</evidence>
<name>NRDR_METNO</name>
<organism>
    <name type="scientific">Methylobacterium nodulans (strain LMG 21967 / CNCM I-2342 / ORS 2060)</name>
    <dbReference type="NCBI Taxonomy" id="460265"/>
    <lineage>
        <taxon>Bacteria</taxon>
        <taxon>Pseudomonadati</taxon>
        <taxon>Pseudomonadota</taxon>
        <taxon>Alphaproteobacteria</taxon>
        <taxon>Hyphomicrobiales</taxon>
        <taxon>Methylobacteriaceae</taxon>
        <taxon>Methylobacterium</taxon>
    </lineage>
</organism>
<feature type="chain" id="PRO_1000191804" description="Transcriptional repressor NrdR">
    <location>
        <begin position="1"/>
        <end position="193"/>
    </location>
</feature>
<feature type="domain" description="ATP-cone" evidence="1">
    <location>
        <begin position="49"/>
        <end position="139"/>
    </location>
</feature>
<feature type="zinc finger region" evidence="1">
    <location>
        <begin position="3"/>
        <end position="34"/>
    </location>
</feature>
<feature type="region of interest" description="Disordered" evidence="2">
    <location>
        <begin position="150"/>
        <end position="193"/>
    </location>
</feature>
<gene>
    <name evidence="1" type="primary">nrdR</name>
    <name type="ordered locus">Mnod_5296</name>
</gene>
<protein>
    <recommendedName>
        <fullName evidence="1">Transcriptional repressor NrdR</fullName>
    </recommendedName>
</protein>